<comment type="function">
    <text evidence="1">Involved in pre-mRNA splicing. May be involved in endoplasmic reticulum-associated protein degradation (ERAD) and required for growth at low and high temperatures (By similarity).</text>
</comment>
<comment type="subunit">
    <text evidence="1">Associated with the spliceosome.</text>
</comment>
<comment type="subcellular location">
    <subcellularLocation>
        <location evidence="1">Cytoplasm</location>
    </subcellularLocation>
    <subcellularLocation>
        <location evidence="1">Nucleus</location>
    </subcellularLocation>
</comment>
<comment type="similarity">
    <text evidence="3">Belongs to the DnaJ family.</text>
</comment>
<gene>
    <name type="primary">CWC23</name>
    <name type="ordered locus">CAGL0I09526g</name>
</gene>
<name>CWC23_CANGA</name>
<reference key="1">
    <citation type="journal article" date="2004" name="Nature">
        <title>Genome evolution in yeasts.</title>
        <authorList>
            <person name="Dujon B."/>
            <person name="Sherman D."/>
            <person name="Fischer G."/>
            <person name="Durrens P."/>
            <person name="Casaregola S."/>
            <person name="Lafontaine I."/>
            <person name="de Montigny J."/>
            <person name="Marck C."/>
            <person name="Neuveglise C."/>
            <person name="Talla E."/>
            <person name="Goffard N."/>
            <person name="Frangeul L."/>
            <person name="Aigle M."/>
            <person name="Anthouard V."/>
            <person name="Babour A."/>
            <person name="Barbe V."/>
            <person name="Barnay S."/>
            <person name="Blanchin S."/>
            <person name="Beckerich J.-M."/>
            <person name="Beyne E."/>
            <person name="Bleykasten C."/>
            <person name="Boisrame A."/>
            <person name="Boyer J."/>
            <person name="Cattolico L."/>
            <person name="Confanioleri F."/>
            <person name="de Daruvar A."/>
            <person name="Despons L."/>
            <person name="Fabre E."/>
            <person name="Fairhead C."/>
            <person name="Ferry-Dumazet H."/>
            <person name="Groppi A."/>
            <person name="Hantraye F."/>
            <person name="Hennequin C."/>
            <person name="Jauniaux N."/>
            <person name="Joyet P."/>
            <person name="Kachouri R."/>
            <person name="Kerrest A."/>
            <person name="Koszul R."/>
            <person name="Lemaire M."/>
            <person name="Lesur I."/>
            <person name="Ma L."/>
            <person name="Muller H."/>
            <person name="Nicaud J.-M."/>
            <person name="Nikolski M."/>
            <person name="Oztas S."/>
            <person name="Ozier-Kalogeropoulos O."/>
            <person name="Pellenz S."/>
            <person name="Potier S."/>
            <person name="Richard G.-F."/>
            <person name="Straub M.-L."/>
            <person name="Suleau A."/>
            <person name="Swennen D."/>
            <person name="Tekaia F."/>
            <person name="Wesolowski-Louvel M."/>
            <person name="Westhof E."/>
            <person name="Wirth B."/>
            <person name="Zeniou-Meyer M."/>
            <person name="Zivanovic Y."/>
            <person name="Bolotin-Fukuhara M."/>
            <person name="Thierry A."/>
            <person name="Bouchier C."/>
            <person name="Caudron B."/>
            <person name="Scarpelli C."/>
            <person name="Gaillardin C."/>
            <person name="Weissenbach J."/>
            <person name="Wincker P."/>
            <person name="Souciet J.-L."/>
        </authorList>
    </citation>
    <scope>NUCLEOTIDE SEQUENCE [LARGE SCALE GENOMIC DNA]</scope>
    <source>
        <strain>ATCC 2001 / BCRC 20586 / JCM 3761 / NBRC 0622 / NRRL Y-65 / CBS 138</strain>
    </source>
</reference>
<keyword id="KW-0143">Chaperone</keyword>
<keyword id="KW-0963">Cytoplasm</keyword>
<keyword id="KW-0507">mRNA processing</keyword>
<keyword id="KW-0508">mRNA splicing</keyword>
<keyword id="KW-0539">Nucleus</keyword>
<keyword id="KW-1185">Reference proteome</keyword>
<keyword id="KW-0747">Spliceosome</keyword>
<protein>
    <recommendedName>
        <fullName>Pre-mRNA-splicing factor CWC23</fullName>
    </recommendedName>
</protein>
<organism>
    <name type="scientific">Candida glabrata (strain ATCC 2001 / BCRC 20586 / JCM 3761 / NBRC 0622 / NRRL Y-65 / CBS 138)</name>
    <name type="common">Yeast</name>
    <name type="synonym">Nakaseomyces glabratus</name>
    <dbReference type="NCBI Taxonomy" id="284593"/>
    <lineage>
        <taxon>Eukaryota</taxon>
        <taxon>Fungi</taxon>
        <taxon>Dikarya</taxon>
        <taxon>Ascomycota</taxon>
        <taxon>Saccharomycotina</taxon>
        <taxon>Saccharomycetes</taxon>
        <taxon>Saccharomycetales</taxon>
        <taxon>Saccharomycetaceae</taxon>
        <taxon>Nakaseomyces</taxon>
    </lineage>
</organism>
<accession>Q6FQ33</accession>
<proteinExistence type="inferred from homology"/>
<sequence>MSDVVKTVIGQRLDLYKLLELNYKDYKGNDDAATTHSLKKQYRKLSLRYHPDKNPGPEYIDRFHLLNLAITVLADPAKKAEYDQWVAQYLYPDNGLSEAEQTRREALVQKLNASERKVREDNQGGNVADIGKIQNYGEKLRRMAHFGLGFGDWRNLDEHISRATTNTIEDSTTDKEVCTLRAVFDFQSIENISDPNNLRRYMNEVFPEYMYDIDEIRYSSNNVYDGEEDIVVYIVLKDPIKTGRLYHQIKRNPPDAFVEIEPYISPKLFESFSKEIPLNDHVKNLLRGVPEVIDLD</sequence>
<evidence type="ECO:0000250" key="1"/>
<evidence type="ECO:0000255" key="2">
    <source>
        <dbReference type="PROSITE-ProRule" id="PRU00286"/>
    </source>
</evidence>
<evidence type="ECO:0000305" key="3"/>
<dbReference type="EMBL" id="CR380955">
    <property type="protein sequence ID" value="CAG60598.1"/>
    <property type="molecule type" value="Genomic_DNA"/>
</dbReference>
<dbReference type="RefSeq" id="XP_447661.1">
    <property type="nucleotide sequence ID" value="XM_447661.1"/>
</dbReference>
<dbReference type="FunCoup" id="Q6FQ33">
    <property type="interactions" value="162"/>
</dbReference>
<dbReference type="STRING" id="284593.Q6FQ33"/>
<dbReference type="EnsemblFungi" id="CAGL0I09526g-T">
    <property type="protein sequence ID" value="CAGL0I09526g-T-p1"/>
    <property type="gene ID" value="CAGL0I09526g"/>
</dbReference>
<dbReference type="KEGG" id="cgr:2888934"/>
<dbReference type="CGD" id="CAL0132576">
    <property type="gene designation" value="CAGL0I09526g"/>
</dbReference>
<dbReference type="VEuPathDB" id="FungiDB:CAGL0I09526g"/>
<dbReference type="eggNOG" id="KOG0716">
    <property type="taxonomic scope" value="Eukaryota"/>
</dbReference>
<dbReference type="HOGENOM" id="CLU_063717_0_0_1"/>
<dbReference type="InParanoid" id="Q6FQ33"/>
<dbReference type="OMA" id="KHFKLPY"/>
<dbReference type="Proteomes" id="UP000002428">
    <property type="component" value="Chromosome I"/>
</dbReference>
<dbReference type="GO" id="GO:0005737">
    <property type="term" value="C:cytoplasm"/>
    <property type="evidence" value="ECO:0007669"/>
    <property type="project" value="UniProtKB-SubCell"/>
</dbReference>
<dbReference type="GO" id="GO:0005681">
    <property type="term" value="C:spliceosomal complex"/>
    <property type="evidence" value="ECO:0007669"/>
    <property type="project" value="UniProtKB-KW"/>
</dbReference>
<dbReference type="GO" id="GO:0000390">
    <property type="term" value="P:spliceosomal complex disassembly"/>
    <property type="evidence" value="ECO:0007669"/>
    <property type="project" value="TreeGrafter"/>
</dbReference>
<dbReference type="CDD" id="cd06257">
    <property type="entry name" value="DnaJ"/>
    <property type="match status" value="1"/>
</dbReference>
<dbReference type="Gene3D" id="1.10.287.110">
    <property type="entry name" value="DnaJ domain"/>
    <property type="match status" value="1"/>
</dbReference>
<dbReference type="InterPro" id="IPR001623">
    <property type="entry name" value="DnaJ_domain"/>
</dbReference>
<dbReference type="InterPro" id="IPR036869">
    <property type="entry name" value="J_dom_sf"/>
</dbReference>
<dbReference type="InterPro" id="IPR052094">
    <property type="entry name" value="Pre-mRNA-splicing_ERAD"/>
</dbReference>
<dbReference type="PANTHER" id="PTHR44313">
    <property type="entry name" value="DNAJ HOMOLOG SUBFAMILY C MEMBER 17"/>
    <property type="match status" value="1"/>
</dbReference>
<dbReference type="PANTHER" id="PTHR44313:SF1">
    <property type="entry name" value="DNAJ HOMOLOG SUBFAMILY C MEMBER 17"/>
    <property type="match status" value="1"/>
</dbReference>
<dbReference type="Pfam" id="PF00226">
    <property type="entry name" value="DnaJ"/>
    <property type="match status" value="1"/>
</dbReference>
<dbReference type="PRINTS" id="PR00625">
    <property type="entry name" value="JDOMAIN"/>
</dbReference>
<dbReference type="SMART" id="SM00271">
    <property type="entry name" value="DnaJ"/>
    <property type="match status" value="1"/>
</dbReference>
<dbReference type="SUPFAM" id="SSF46565">
    <property type="entry name" value="Chaperone J-domain"/>
    <property type="match status" value="1"/>
</dbReference>
<dbReference type="PROSITE" id="PS50076">
    <property type="entry name" value="DNAJ_2"/>
    <property type="match status" value="1"/>
</dbReference>
<feature type="chain" id="PRO_0000071126" description="Pre-mRNA-splicing factor CWC23">
    <location>
        <begin position="1"/>
        <end position="296"/>
    </location>
</feature>
<feature type="domain" description="J" evidence="2">
    <location>
        <begin position="14"/>
        <end position="86"/>
    </location>
</feature>